<name>MMLI_PSERE</name>
<proteinExistence type="evidence at protein level"/>
<organism>
    <name type="scientific">Pseudomonas reinekei</name>
    <dbReference type="NCBI Taxonomy" id="395598"/>
    <lineage>
        <taxon>Bacteria</taxon>
        <taxon>Pseudomonadati</taxon>
        <taxon>Pseudomonadota</taxon>
        <taxon>Gammaproteobacteria</taxon>
        <taxon>Pseudomonadales</taxon>
        <taxon>Pseudomonadaceae</taxon>
        <taxon>Pseudomonas</taxon>
    </lineage>
</organism>
<gene>
    <name evidence="3 4" type="primary">mmlI</name>
    <name evidence="9" type="ORF">BVK86_00405</name>
    <name evidence="8" type="ORF">F7R15_00410</name>
    <name evidence="10" type="ORF">SAMN04490202_5523</name>
</gene>
<sequence length="107" mass="12540">MIRILYLLVKPESMSHEQFRKECVVHFQMSAGMPGLHKYEVRLVAGNPTDTHVPYLDVGRIDAIGECWFASEEQYQVYMESDIRKAWFEHGKYFIGQLKPFVTEELV</sequence>
<feature type="chain" id="PRO_0000462184" description="4-carboxymethyl-4-methylbutenolide mutase">
    <location>
        <begin position="1"/>
        <end position="107"/>
    </location>
</feature>
<feature type="active site" description="Proton donor/acceptor" evidence="6">
    <location>
        <position position="26"/>
    </location>
</feature>
<feature type="binding site" evidence="1 12">
    <location>
        <position position="26"/>
    </location>
    <ligand>
        <name>3-methylmuconolactone</name>
        <dbReference type="ChEBI" id="CHEBI:57883"/>
    </ligand>
</feature>
<feature type="binding site" evidence="1 13">
    <location>
        <position position="26"/>
    </location>
    <ligand>
        <name>4-methylmuconolactone</name>
        <dbReference type="ChEBI" id="CHEBI:57888"/>
    </ligand>
</feature>
<feature type="binding site" evidence="1 12">
    <location>
        <position position="39"/>
    </location>
    <ligand>
        <name>3-methylmuconolactone</name>
        <dbReference type="ChEBI" id="CHEBI:57883"/>
    </ligand>
</feature>
<feature type="binding site" evidence="1 13">
    <location>
        <position position="39"/>
    </location>
    <ligand>
        <name>4-methylmuconolactone</name>
        <dbReference type="ChEBI" id="CHEBI:57888"/>
    </ligand>
</feature>
<feature type="mutagenesis site" description="Almost loss of activity." evidence="1">
    <original>H</original>
    <variation>A</variation>
    <location>
        <position position="26"/>
    </location>
</feature>
<feature type="mutagenesis site" description="5-fold decrease in catalytic efficiency." evidence="1">
    <original>Y</original>
    <variation>F</variation>
    <location>
        <position position="39"/>
    </location>
</feature>
<feature type="mutagenesis site" description="5-fold decrease in catalytic efficiency." evidence="1">
    <original>H</original>
    <variation>A</variation>
    <location>
        <position position="52"/>
    </location>
</feature>
<feature type="mutagenesis site" description="5-fold decrease in catalytic efficiency." evidence="1">
    <original>C</original>
    <variation>S</variation>
    <location>
        <position position="67"/>
    </location>
</feature>
<keyword id="KW-0002">3D-structure</keyword>
<keyword id="KW-0413">Isomerase</keyword>
<accession>C5MR76</accession>
<dbReference type="EC" id="5.4.99.14" evidence="1"/>
<dbReference type="EMBL" id="GQ141876">
    <property type="protein sequence ID" value="ACR82080.1"/>
    <property type="molecule type" value="Genomic_DNA"/>
</dbReference>
<dbReference type="EMBL" id="LT629709">
    <property type="protein sequence ID" value="SDP67526.1"/>
    <property type="molecule type" value="Genomic_DNA"/>
</dbReference>
<dbReference type="EMBL" id="MSTQ01000001">
    <property type="protein sequence ID" value="OLU05856.1"/>
    <property type="molecule type" value="Genomic_DNA"/>
</dbReference>
<dbReference type="EMBL" id="VZPS01000001">
    <property type="protein sequence ID" value="KAB0488369.1"/>
    <property type="molecule type" value="Genomic_DNA"/>
</dbReference>
<dbReference type="RefSeq" id="WP_075944524.1">
    <property type="nucleotide sequence ID" value="NZ_VZPS01000001.1"/>
</dbReference>
<dbReference type="PDB" id="3HDS">
    <property type="method" value="X-ray"/>
    <property type="resolution" value="1.45 A"/>
    <property type="chains" value="A/B/C/D=1-107"/>
</dbReference>
<dbReference type="PDB" id="3HF5">
    <property type="method" value="X-ray"/>
    <property type="resolution" value="1.40 A"/>
    <property type="chains" value="A/B/C/D=1-107"/>
</dbReference>
<dbReference type="PDB" id="3HFK">
    <property type="method" value="X-ray"/>
    <property type="resolution" value="1.90 A"/>
    <property type="chains" value="A/B/C/D=1-107"/>
</dbReference>
<dbReference type="PDBsum" id="3HDS"/>
<dbReference type="PDBsum" id="3HF5"/>
<dbReference type="PDBsum" id="3HFK"/>
<dbReference type="SMR" id="C5MR76"/>
<dbReference type="OrthoDB" id="6778120at2"/>
<dbReference type="BRENDA" id="5.4.99.14">
    <property type="organism ID" value="10505"/>
</dbReference>
<dbReference type="EvolutionaryTrace" id="C5MR76"/>
<dbReference type="Proteomes" id="UP000186756">
    <property type="component" value="Unassembled WGS sequence"/>
</dbReference>
<dbReference type="Proteomes" id="UP000198549">
    <property type="component" value="Chromosome i"/>
</dbReference>
<dbReference type="Proteomes" id="UP000460142">
    <property type="component" value="Unassembled WGS sequence"/>
</dbReference>
<dbReference type="GO" id="GO:0016853">
    <property type="term" value="F:isomerase activity"/>
    <property type="evidence" value="ECO:0007669"/>
    <property type="project" value="UniProtKB-KW"/>
</dbReference>
<dbReference type="Gene3D" id="3.30.70.100">
    <property type="match status" value="1"/>
</dbReference>
<dbReference type="InterPro" id="IPR011008">
    <property type="entry name" value="Dimeric_a/b-barrel"/>
</dbReference>
<dbReference type="InterPro" id="IPR018566">
    <property type="entry name" value="MeMu_Me-Isoase"/>
</dbReference>
<dbReference type="Pfam" id="PF09448">
    <property type="entry name" value="MmlI"/>
    <property type="match status" value="1"/>
</dbReference>
<dbReference type="SUPFAM" id="SSF54909">
    <property type="entry name" value="Dimeric alpha+beta barrel"/>
    <property type="match status" value="1"/>
</dbReference>
<protein>
    <recommendedName>
        <fullName evidence="5">4-carboxymethyl-4-methylbutenolide mutase</fullName>
        <ecNumber evidence="1">5.4.99.14</ecNumber>
    </recommendedName>
    <alternativeName>
        <fullName evidence="3">4-methylmuconolactone methylisomerase</fullName>
        <shortName evidence="3">MLMI</shortName>
    </alternativeName>
</protein>
<evidence type="ECO:0000269" key="1">
    <source>
    </source>
</evidence>
<evidence type="ECO:0000269" key="2">
    <source>
    </source>
</evidence>
<evidence type="ECO:0000303" key="3">
    <source>
    </source>
</evidence>
<evidence type="ECO:0000303" key="4">
    <source>
    </source>
</evidence>
<evidence type="ECO:0000305" key="5"/>
<evidence type="ECO:0000305" key="6">
    <source>
    </source>
</evidence>
<evidence type="ECO:0000312" key="7">
    <source>
        <dbReference type="EMBL" id="ACR82080.1"/>
    </source>
</evidence>
<evidence type="ECO:0000312" key="8">
    <source>
        <dbReference type="EMBL" id="KAB0488369.1"/>
    </source>
</evidence>
<evidence type="ECO:0000312" key="9">
    <source>
        <dbReference type="EMBL" id="OLU05856.1"/>
    </source>
</evidence>
<evidence type="ECO:0000312" key="10">
    <source>
        <dbReference type="EMBL" id="SDP67526.1"/>
    </source>
</evidence>
<evidence type="ECO:0007744" key="11">
    <source>
        <dbReference type="PDB" id="3HDS"/>
    </source>
</evidence>
<evidence type="ECO:0007744" key="12">
    <source>
        <dbReference type="PDB" id="3HF5"/>
    </source>
</evidence>
<evidence type="ECO:0007744" key="13">
    <source>
        <dbReference type="PDB" id="3HFK"/>
    </source>
</evidence>
<reference evidence="7 11 12 13" key="1">
    <citation type="journal article" date="2009" name="J. Biol. Chem.">
        <title>Crystal structure and catalytic mechanism of 4-methylmuconolactone methylisomerase.</title>
        <authorList>
            <person name="Marin M."/>
            <person name="Heinz D.W."/>
            <person name="Pieper D.H."/>
            <person name="Klink B.U."/>
        </authorList>
    </citation>
    <scope>NUCLEOTIDE SEQUENCE [GENOMIC DNA]</scope>
    <scope>X-RAY CRYSTALLOGRAPHY (1.40 ANGSTROMS) IN COMPLEX WITH 3-METHYLMUCONOLACTONE AND OF MUTANT ALA-52 IN COMPLEX WITH 4-METHYLMUCONOLACTONE</scope>
    <scope>FUNCTION</scope>
    <scope>CATALYTIC ACTIVITY</scope>
    <scope>PROPOSED REACTION MECHANISM</scope>
    <scope>ACTIVITY REGULATION</scope>
    <scope>BIOPHYSICOCHEMICAL PROPERTIES</scope>
    <scope>SUBUNIT</scope>
    <scope>DOMAIN</scope>
    <scope>ACTIVE SITE</scope>
    <scope>MUTAGENESIS OF HIS-26; TYR-39; HIS-52 AND CYS-67</scope>
    <source>
        <strain>DSM 18361 / CCUG 53116 / MT1</strain>
    </source>
</reference>
<reference evidence="7" key="2">
    <citation type="journal article" date="2010" name="J. Bacteriol.">
        <title>Modified 3-oxoadipate pathway for the biodegradation of methylaromatics in Pseudomonas reinekei MT1.</title>
        <authorList>
            <person name="Marin M."/>
            <person name="Perez-Pantoja D."/>
            <person name="Donoso R."/>
            <person name="Wray V."/>
            <person name="Gonzalez B."/>
            <person name="Pieper D.H."/>
        </authorList>
    </citation>
    <scope>NUCLEOTIDE SEQUENCE [GENOMIC DNA]</scope>
    <scope>FUNCTION</scope>
    <source>
        <strain>DSM 18361 / CCUG 53116 / MT1</strain>
    </source>
</reference>
<reference evidence="10" key="3">
    <citation type="submission" date="2016-10" db="EMBL/GenBank/DDBJ databases">
        <authorList>
            <person name="de Groot N.N."/>
        </authorList>
    </citation>
    <scope>NUCLEOTIDE SEQUENCE [LARGE SCALE GENOMIC DNA]</scope>
    <source>
        <strain>BS3776</strain>
    </source>
</reference>
<reference evidence="9" key="4">
    <citation type="submission" date="2017-01" db="EMBL/GenBank/DDBJ databases">
        <authorList>
            <person name="Mah S.A."/>
            <person name="Swanson W.J."/>
            <person name="Moy G.W."/>
            <person name="Vacquier V.D."/>
        </authorList>
    </citation>
    <scope>NUCLEOTIDE SEQUENCE [LARGE SCALE GENOMIC DNA]</scope>
    <source>
        <strain>DSM 18361 / CCUG 53116 / MT1</strain>
    </source>
</reference>
<reference evidence="8" key="5">
    <citation type="submission" date="2019-09" db="EMBL/GenBank/DDBJ databases">
        <title>Draft genome sequences of 48 bacterial type strains from the CCUG.</title>
        <authorList>
            <person name="Tunovic T."/>
            <person name="Pineiro-Iglesias B."/>
            <person name="Unosson C."/>
            <person name="Inganas E."/>
            <person name="Ohlen M."/>
            <person name="Cardew S."/>
            <person name="Jensie-Markopoulos S."/>
            <person name="Salva-Serra F."/>
            <person name="Jaen-Luchoro D."/>
            <person name="Karlsson R."/>
            <person name="Svensson-Stadler L."/>
            <person name="Chun J."/>
            <person name="Moore E."/>
        </authorList>
    </citation>
    <scope>NUCLEOTIDE SEQUENCE [LARGE SCALE GENOMIC DNA]</scope>
    <source>
        <strain>DSM 18361 / CCUG 53116 / MT1</strain>
    </source>
</reference>
<comment type="function">
    <text evidence="1 2">Isomerase involved in the degradation of 4-methylsalicylate and 5-methylsalicylate (PubMed:20061479). Catalyzes the isomerization of the dead-end metabolite 4-methylmuconolactone (4-ML) to 3-methylmuconolactone (3-ML), which can then be further degraded through a modified 3-oxoadipate pathway (PubMed:19801657). Can also use 1-methylbislactone but not 3-methyl-cis,cis-muconate (PubMed:19801657).</text>
</comment>
<comment type="catalytic activity">
    <reaction evidence="1">
        <text>4-methylmuconolactone = 3-methylmuconolactone</text>
        <dbReference type="Rhea" id="RHEA:19237"/>
        <dbReference type="ChEBI" id="CHEBI:57883"/>
        <dbReference type="ChEBI" id="CHEBI:57888"/>
        <dbReference type="EC" id="5.4.99.14"/>
    </reaction>
    <physiologicalReaction direction="left-to-right" evidence="6">
        <dbReference type="Rhea" id="RHEA:19238"/>
    </physiologicalReaction>
</comment>
<comment type="activity regulation">
    <text evidence="1">Inhibited by p-chloromercuribenzoate.</text>
</comment>
<comment type="biophysicochemical properties">
    <kinetics>
        <KM evidence="1">52 uM for 4-methylmuconolactone</KM>
        <text evidence="1">kcat is 24.2 sec(-1) with 4-methylmuconolactone as substrate.</text>
    </kinetics>
    <phDependence>
        <text evidence="1">Optimum pH is 6.3-6.5.</text>
    </phDependence>
</comment>
<comment type="subunit">
    <text evidence="1">Homodimer.</text>
</comment>
<comment type="domain">
    <text evidence="1">Exhibits a ferredoxin-like fold.</text>
</comment>
<comment type="similarity">
    <text evidence="5">Belongs to the MmlI family.</text>
</comment>